<accession>Q5HAP4</accession>
<accession>Q5FDB4</accession>
<evidence type="ECO:0000255" key="1">
    <source>
        <dbReference type="HAMAP-Rule" id="MF_00013"/>
    </source>
</evidence>
<evidence type="ECO:0000255" key="2">
    <source>
        <dbReference type="PROSITE-ProRule" id="PRU01067"/>
    </source>
</evidence>
<protein>
    <recommendedName>
        <fullName evidence="1">Octanoyltransferase</fullName>
        <ecNumber evidence="1">2.3.1.181</ecNumber>
    </recommendedName>
    <alternativeName>
        <fullName evidence="1">Lipoate-protein ligase B</fullName>
    </alternativeName>
    <alternativeName>
        <fullName evidence="1">Lipoyl/octanoyl transferase</fullName>
    </alternativeName>
    <alternativeName>
        <fullName evidence="1">Octanoyl-[acyl-carrier-protein]-protein N-octanoyltransferase</fullName>
    </alternativeName>
</protein>
<gene>
    <name evidence="1" type="primary">lipB</name>
    <name type="ordered locus">Erum6360</name>
    <name type="ordered locus">ERWE_CDS_06670</name>
</gene>
<keyword id="KW-0012">Acyltransferase</keyword>
<keyword id="KW-0963">Cytoplasm</keyword>
<keyword id="KW-0808">Transferase</keyword>
<proteinExistence type="inferred from homology"/>
<name>LIPB_EHRRW</name>
<comment type="function">
    <text evidence="1">Catalyzes the transfer of endogenously produced octanoic acid from octanoyl-acyl-carrier-protein onto the lipoyl domains of lipoate-dependent enzymes. Lipoyl-ACP can also act as a substrate although octanoyl-ACP is likely to be the physiological substrate.</text>
</comment>
<comment type="catalytic activity">
    <reaction evidence="1">
        <text>octanoyl-[ACP] + L-lysyl-[protein] = N(6)-octanoyl-L-lysyl-[protein] + holo-[ACP] + H(+)</text>
        <dbReference type="Rhea" id="RHEA:17665"/>
        <dbReference type="Rhea" id="RHEA-COMP:9636"/>
        <dbReference type="Rhea" id="RHEA-COMP:9685"/>
        <dbReference type="Rhea" id="RHEA-COMP:9752"/>
        <dbReference type="Rhea" id="RHEA-COMP:9928"/>
        <dbReference type="ChEBI" id="CHEBI:15378"/>
        <dbReference type="ChEBI" id="CHEBI:29969"/>
        <dbReference type="ChEBI" id="CHEBI:64479"/>
        <dbReference type="ChEBI" id="CHEBI:78463"/>
        <dbReference type="ChEBI" id="CHEBI:78809"/>
        <dbReference type="EC" id="2.3.1.181"/>
    </reaction>
</comment>
<comment type="pathway">
    <text evidence="1">Protein modification; protein lipoylation via endogenous pathway; protein N(6)-(lipoyl)lysine from octanoyl-[acyl-carrier-protein]: step 1/2.</text>
</comment>
<comment type="subcellular location">
    <subcellularLocation>
        <location evidence="1">Cytoplasm</location>
    </subcellularLocation>
</comment>
<comment type="miscellaneous">
    <text evidence="1">In the reaction, the free carboxyl group of octanoic acid is attached via an amide linkage to the epsilon-amino group of a specific lysine residue of lipoyl domains of lipoate-dependent enzymes.</text>
</comment>
<comment type="similarity">
    <text evidence="1">Belongs to the LipB family.</text>
</comment>
<sequence>MEWKIESLPVPYDKAMCFMQQRVEGIANKTQDELVWLLEHFPLYTAGTSARSEELLTDSLFPVYSTGRGGKYTYHGPGQRIAYVMMDLKARDKCNVRLYVETLGEWIVKTLKHFSIRSYFNPNLIGVWVNHNGSEKKIAAFGIRIRKWITYHGVSINVFTDLSHYSGIIPCGIKEYGITSLKTLGVNILYEEFDVVLKKEFNKVFCNC</sequence>
<dbReference type="EC" id="2.3.1.181" evidence="1"/>
<dbReference type="EMBL" id="CR767821">
    <property type="protein sequence ID" value="CAH58368.1"/>
    <property type="molecule type" value="Genomic_DNA"/>
</dbReference>
<dbReference type="EMBL" id="CR925678">
    <property type="protein sequence ID" value="CAI27161.1"/>
    <property type="molecule type" value="Genomic_DNA"/>
</dbReference>
<dbReference type="RefSeq" id="WP_011155316.1">
    <property type="nucleotide sequence ID" value="NC_005295.2"/>
</dbReference>
<dbReference type="SMR" id="Q5HAP4"/>
<dbReference type="GeneID" id="33057580"/>
<dbReference type="KEGG" id="eru:Erum6360"/>
<dbReference type="KEGG" id="erw:ERWE_CDS_06670"/>
<dbReference type="eggNOG" id="COG0321">
    <property type="taxonomic scope" value="Bacteria"/>
</dbReference>
<dbReference type="HOGENOM" id="CLU_035168_3_0_5"/>
<dbReference type="UniPathway" id="UPA00538">
    <property type="reaction ID" value="UER00592"/>
</dbReference>
<dbReference type="Proteomes" id="UP000001021">
    <property type="component" value="Chromosome"/>
</dbReference>
<dbReference type="GO" id="GO:0005737">
    <property type="term" value="C:cytoplasm"/>
    <property type="evidence" value="ECO:0007669"/>
    <property type="project" value="UniProtKB-SubCell"/>
</dbReference>
<dbReference type="GO" id="GO:0033819">
    <property type="term" value="F:lipoyl(octanoyl) transferase activity"/>
    <property type="evidence" value="ECO:0007669"/>
    <property type="project" value="UniProtKB-EC"/>
</dbReference>
<dbReference type="GO" id="GO:0036211">
    <property type="term" value="P:protein modification process"/>
    <property type="evidence" value="ECO:0007669"/>
    <property type="project" value="InterPro"/>
</dbReference>
<dbReference type="CDD" id="cd16444">
    <property type="entry name" value="LipB"/>
    <property type="match status" value="1"/>
</dbReference>
<dbReference type="Gene3D" id="3.30.930.10">
    <property type="entry name" value="Bira Bifunctional Protein, Domain 2"/>
    <property type="match status" value="1"/>
</dbReference>
<dbReference type="HAMAP" id="MF_00013">
    <property type="entry name" value="LipB"/>
    <property type="match status" value="1"/>
</dbReference>
<dbReference type="InterPro" id="IPR045864">
    <property type="entry name" value="aa-tRNA-synth_II/BPL/LPL"/>
</dbReference>
<dbReference type="InterPro" id="IPR004143">
    <property type="entry name" value="BPL_LPL_catalytic"/>
</dbReference>
<dbReference type="InterPro" id="IPR000544">
    <property type="entry name" value="Octanoyltransferase"/>
</dbReference>
<dbReference type="InterPro" id="IPR020605">
    <property type="entry name" value="Octanoyltransferase_CS"/>
</dbReference>
<dbReference type="NCBIfam" id="TIGR00214">
    <property type="entry name" value="lipB"/>
    <property type="match status" value="1"/>
</dbReference>
<dbReference type="NCBIfam" id="NF010921">
    <property type="entry name" value="PRK14341.1"/>
    <property type="match status" value="1"/>
</dbReference>
<dbReference type="PANTHER" id="PTHR10993:SF7">
    <property type="entry name" value="LIPOYLTRANSFERASE 2, MITOCHONDRIAL-RELATED"/>
    <property type="match status" value="1"/>
</dbReference>
<dbReference type="PANTHER" id="PTHR10993">
    <property type="entry name" value="OCTANOYLTRANSFERASE"/>
    <property type="match status" value="1"/>
</dbReference>
<dbReference type="Pfam" id="PF21948">
    <property type="entry name" value="LplA-B_cat"/>
    <property type="match status" value="1"/>
</dbReference>
<dbReference type="PIRSF" id="PIRSF016262">
    <property type="entry name" value="LPLase"/>
    <property type="match status" value="1"/>
</dbReference>
<dbReference type="SUPFAM" id="SSF55681">
    <property type="entry name" value="Class II aaRS and biotin synthetases"/>
    <property type="match status" value="1"/>
</dbReference>
<dbReference type="PROSITE" id="PS51733">
    <property type="entry name" value="BPL_LPL_CATALYTIC"/>
    <property type="match status" value="1"/>
</dbReference>
<dbReference type="PROSITE" id="PS01313">
    <property type="entry name" value="LIPB"/>
    <property type="match status" value="1"/>
</dbReference>
<reference key="1">
    <citation type="journal article" date="2005" name="Proc. Natl. Acad. Sci. U.S.A.">
        <title>The genome of the heartwater agent Ehrlichia ruminantium contains multiple tandem repeats of actively variable copy number.</title>
        <authorList>
            <person name="Collins N.E."/>
            <person name="Liebenberg J."/>
            <person name="de Villiers E.P."/>
            <person name="Brayton K.A."/>
            <person name="Louw E."/>
            <person name="Pretorius A."/>
            <person name="Faber F.E."/>
            <person name="van Heerden H."/>
            <person name="Josemans A."/>
            <person name="van Kleef M."/>
            <person name="Steyn H.C."/>
            <person name="van Strijp M.F."/>
            <person name="Zweygarth E."/>
            <person name="Jongejan F."/>
            <person name="Maillard J.C."/>
            <person name="Berthier D."/>
            <person name="Botha M."/>
            <person name="Joubert F."/>
            <person name="Corton C.H."/>
            <person name="Thomson N.R."/>
            <person name="Allsopp M.T."/>
            <person name="Allsopp B.A."/>
        </authorList>
    </citation>
    <scope>NUCLEOTIDE SEQUENCE [LARGE SCALE GENOMIC DNA]</scope>
    <source>
        <strain>Welgevonden</strain>
    </source>
</reference>
<reference key="2">
    <citation type="journal article" date="2006" name="J. Bacteriol.">
        <title>Comparative genomic analysis of three strains of Ehrlichia ruminantium reveals an active process of genome size plasticity.</title>
        <authorList>
            <person name="Frutos R."/>
            <person name="Viari A."/>
            <person name="Ferraz C."/>
            <person name="Morgat A."/>
            <person name="Eychenie S."/>
            <person name="Kandassamy Y."/>
            <person name="Chantal I."/>
            <person name="Bensaid A."/>
            <person name="Coissac E."/>
            <person name="Vachiery N."/>
            <person name="Demaille J."/>
            <person name="Martinez D."/>
        </authorList>
    </citation>
    <scope>NUCLEOTIDE SEQUENCE [LARGE SCALE GENOMIC DNA]</scope>
    <source>
        <strain>Welgevonden</strain>
    </source>
</reference>
<feature type="chain" id="PRO_0000242721" description="Octanoyltransferase">
    <location>
        <begin position="1"/>
        <end position="208"/>
    </location>
</feature>
<feature type="domain" description="BPL/LPL catalytic" evidence="2">
    <location>
        <begin position="29"/>
        <end position="208"/>
    </location>
</feature>
<feature type="active site" description="Acyl-thioester intermediate" evidence="1">
    <location>
        <position position="171"/>
    </location>
</feature>
<feature type="binding site" evidence="1">
    <location>
        <begin position="68"/>
        <end position="75"/>
    </location>
    <ligand>
        <name>substrate</name>
    </ligand>
</feature>
<feature type="binding site" evidence="1">
    <location>
        <begin position="140"/>
        <end position="142"/>
    </location>
    <ligand>
        <name>substrate</name>
    </ligand>
</feature>
<feature type="binding site" evidence="1">
    <location>
        <begin position="153"/>
        <end position="155"/>
    </location>
    <ligand>
        <name>substrate</name>
    </ligand>
</feature>
<feature type="site" description="Lowers pKa of active site Cys" evidence="1">
    <location>
        <position position="137"/>
    </location>
</feature>
<organism>
    <name type="scientific">Ehrlichia ruminantium (strain Welgevonden)</name>
    <dbReference type="NCBI Taxonomy" id="254945"/>
    <lineage>
        <taxon>Bacteria</taxon>
        <taxon>Pseudomonadati</taxon>
        <taxon>Pseudomonadota</taxon>
        <taxon>Alphaproteobacteria</taxon>
        <taxon>Rickettsiales</taxon>
        <taxon>Anaplasmataceae</taxon>
        <taxon>Ehrlichia</taxon>
    </lineage>
</organism>